<sequence length="273" mass="30619">MVIVRCKPTSPGRRHVVKVICPNLYKGRPIASLLQKKVKTGGRNNYGRITTRHIGGGHKKLYRCIDFKRRYDNVPAVVQRIEYDPNRSSNIILILYKNGKRSYILEPKGIKVGDIIESGNLVPIKLGNALPIKKIPIGTILHNIEIKSGKGGQIARSAGSYAQLISKENKYVVIRLRSGELRKIHIECRATIGEVGNSEHMLRILGKAGASRRYGIRPTVRGTAMNPVDHPHGGGEGRNFGKHPVSPWGLKTKGKKTRRNKRTERFIVRHRNK</sequence>
<keyword id="KW-1185">Reference proteome</keyword>
<keyword id="KW-0687">Ribonucleoprotein</keyword>
<keyword id="KW-0689">Ribosomal protein</keyword>
<keyword id="KW-0694">RNA-binding</keyword>
<keyword id="KW-0699">rRNA-binding</keyword>
<reference key="1">
    <citation type="journal article" date="2006" name="Science">
        <title>A small microbial genome: the end of a long symbiotic relationship?</title>
        <authorList>
            <person name="Perez-Brocal V."/>
            <person name="Gil R."/>
            <person name="Ramos S."/>
            <person name="Lamelas A."/>
            <person name="Postigo M."/>
            <person name="Michelena J.M."/>
            <person name="Silva F.J."/>
            <person name="Moya A."/>
            <person name="Latorre A."/>
        </authorList>
    </citation>
    <scope>NUCLEOTIDE SEQUENCE [LARGE SCALE GENOMIC DNA]</scope>
    <source>
        <strain>Cc</strain>
    </source>
</reference>
<dbReference type="EMBL" id="CP000263">
    <property type="protein sequence ID" value="ABJ90792.1"/>
    <property type="molecule type" value="Genomic_DNA"/>
</dbReference>
<dbReference type="RefSeq" id="WP_011672711.1">
    <property type="nucleotide sequence ID" value="NC_008513.1"/>
</dbReference>
<dbReference type="SMR" id="Q057A7"/>
<dbReference type="STRING" id="372461.BCc_338"/>
<dbReference type="KEGG" id="bcc:BCc_338"/>
<dbReference type="eggNOG" id="COG0090">
    <property type="taxonomic scope" value="Bacteria"/>
</dbReference>
<dbReference type="HOGENOM" id="CLU_036235_2_1_6"/>
<dbReference type="OrthoDB" id="9778722at2"/>
<dbReference type="Proteomes" id="UP000000669">
    <property type="component" value="Chromosome"/>
</dbReference>
<dbReference type="GO" id="GO:0015934">
    <property type="term" value="C:large ribosomal subunit"/>
    <property type="evidence" value="ECO:0007669"/>
    <property type="project" value="InterPro"/>
</dbReference>
<dbReference type="GO" id="GO:0019843">
    <property type="term" value="F:rRNA binding"/>
    <property type="evidence" value="ECO:0007669"/>
    <property type="project" value="UniProtKB-UniRule"/>
</dbReference>
<dbReference type="GO" id="GO:0003735">
    <property type="term" value="F:structural constituent of ribosome"/>
    <property type="evidence" value="ECO:0007669"/>
    <property type="project" value="InterPro"/>
</dbReference>
<dbReference type="GO" id="GO:0016740">
    <property type="term" value="F:transferase activity"/>
    <property type="evidence" value="ECO:0007669"/>
    <property type="project" value="InterPro"/>
</dbReference>
<dbReference type="GO" id="GO:0002181">
    <property type="term" value="P:cytoplasmic translation"/>
    <property type="evidence" value="ECO:0007669"/>
    <property type="project" value="TreeGrafter"/>
</dbReference>
<dbReference type="FunFam" id="2.30.30.30:FF:000001">
    <property type="entry name" value="50S ribosomal protein L2"/>
    <property type="match status" value="1"/>
</dbReference>
<dbReference type="FunFam" id="2.40.50.140:FF:000003">
    <property type="entry name" value="50S ribosomal protein L2"/>
    <property type="match status" value="1"/>
</dbReference>
<dbReference type="FunFam" id="4.10.950.10:FF:000001">
    <property type="entry name" value="50S ribosomal protein L2"/>
    <property type="match status" value="1"/>
</dbReference>
<dbReference type="Gene3D" id="2.30.30.30">
    <property type="match status" value="1"/>
</dbReference>
<dbReference type="Gene3D" id="2.40.50.140">
    <property type="entry name" value="Nucleic acid-binding proteins"/>
    <property type="match status" value="1"/>
</dbReference>
<dbReference type="Gene3D" id="4.10.950.10">
    <property type="entry name" value="Ribosomal protein L2, domain 3"/>
    <property type="match status" value="1"/>
</dbReference>
<dbReference type="HAMAP" id="MF_01320_B">
    <property type="entry name" value="Ribosomal_uL2_B"/>
    <property type="match status" value="1"/>
</dbReference>
<dbReference type="InterPro" id="IPR012340">
    <property type="entry name" value="NA-bd_OB-fold"/>
</dbReference>
<dbReference type="InterPro" id="IPR014722">
    <property type="entry name" value="Rib_uL2_dom2"/>
</dbReference>
<dbReference type="InterPro" id="IPR002171">
    <property type="entry name" value="Ribosomal_uL2"/>
</dbReference>
<dbReference type="InterPro" id="IPR005880">
    <property type="entry name" value="Ribosomal_uL2_bac/org-type"/>
</dbReference>
<dbReference type="InterPro" id="IPR022669">
    <property type="entry name" value="Ribosomal_uL2_C"/>
</dbReference>
<dbReference type="InterPro" id="IPR022671">
    <property type="entry name" value="Ribosomal_uL2_CS"/>
</dbReference>
<dbReference type="InterPro" id="IPR014726">
    <property type="entry name" value="Ribosomal_uL2_dom3"/>
</dbReference>
<dbReference type="InterPro" id="IPR022666">
    <property type="entry name" value="Ribosomal_uL2_RNA-bd_dom"/>
</dbReference>
<dbReference type="InterPro" id="IPR008991">
    <property type="entry name" value="Translation_prot_SH3-like_sf"/>
</dbReference>
<dbReference type="NCBIfam" id="TIGR01171">
    <property type="entry name" value="rplB_bact"/>
    <property type="match status" value="1"/>
</dbReference>
<dbReference type="PANTHER" id="PTHR13691:SF5">
    <property type="entry name" value="LARGE RIBOSOMAL SUBUNIT PROTEIN UL2M"/>
    <property type="match status" value="1"/>
</dbReference>
<dbReference type="PANTHER" id="PTHR13691">
    <property type="entry name" value="RIBOSOMAL PROTEIN L2"/>
    <property type="match status" value="1"/>
</dbReference>
<dbReference type="Pfam" id="PF00181">
    <property type="entry name" value="Ribosomal_L2"/>
    <property type="match status" value="1"/>
</dbReference>
<dbReference type="Pfam" id="PF03947">
    <property type="entry name" value="Ribosomal_L2_C"/>
    <property type="match status" value="1"/>
</dbReference>
<dbReference type="PIRSF" id="PIRSF002158">
    <property type="entry name" value="Ribosomal_L2"/>
    <property type="match status" value="1"/>
</dbReference>
<dbReference type="SMART" id="SM01383">
    <property type="entry name" value="Ribosomal_L2"/>
    <property type="match status" value="1"/>
</dbReference>
<dbReference type="SMART" id="SM01382">
    <property type="entry name" value="Ribosomal_L2_C"/>
    <property type="match status" value="1"/>
</dbReference>
<dbReference type="SUPFAM" id="SSF50249">
    <property type="entry name" value="Nucleic acid-binding proteins"/>
    <property type="match status" value="1"/>
</dbReference>
<dbReference type="SUPFAM" id="SSF50104">
    <property type="entry name" value="Translation proteins SH3-like domain"/>
    <property type="match status" value="1"/>
</dbReference>
<dbReference type="PROSITE" id="PS00467">
    <property type="entry name" value="RIBOSOMAL_L2"/>
    <property type="match status" value="1"/>
</dbReference>
<organism>
    <name type="scientific">Buchnera aphidicola subsp. Cinara cedri (strain Cc)</name>
    <dbReference type="NCBI Taxonomy" id="372461"/>
    <lineage>
        <taxon>Bacteria</taxon>
        <taxon>Pseudomonadati</taxon>
        <taxon>Pseudomonadota</taxon>
        <taxon>Gammaproteobacteria</taxon>
        <taxon>Enterobacterales</taxon>
        <taxon>Erwiniaceae</taxon>
        <taxon>Buchnera</taxon>
    </lineage>
</organism>
<accession>Q057A7</accession>
<protein>
    <recommendedName>
        <fullName evidence="1">Large ribosomal subunit protein uL2</fullName>
    </recommendedName>
    <alternativeName>
        <fullName evidence="3">50S ribosomal protein L2</fullName>
    </alternativeName>
</protein>
<evidence type="ECO:0000255" key="1">
    <source>
        <dbReference type="HAMAP-Rule" id="MF_01320"/>
    </source>
</evidence>
<evidence type="ECO:0000256" key="2">
    <source>
        <dbReference type="SAM" id="MobiDB-lite"/>
    </source>
</evidence>
<evidence type="ECO:0000305" key="3"/>
<gene>
    <name evidence="1" type="primary">rplB</name>
    <name type="ordered locus">BCc_338</name>
</gene>
<feature type="chain" id="PRO_0000309879" description="Large ribosomal subunit protein uL2">
    <location>
        <begin position="1"/>
        <end position="273"/>
    </location>
</feature>
<feature type="region of interest" description="Disordered" evidence="2">
    <location>
        <begin position="221"/>
        <end position="263"/>
    </location>
</feature>
<feature type="compositionally biased region" description="Basic residues" evidence="2">
    <location>
        <begin position="252"/>
        <end position="263"/>
    </location>
</feature>
<name>RL2_BUCCC</name>
<proteinExistence type="inferred from homology"/>
<comment type="function">
    <text evidence="1">One of the primary rRNA binding proteins. Required for association of the 30S and 50S subunits to form the 70S ribosome, for tRNA binding and peptide bond formation. It has been suggested to have peptidyltransferase activity; this is somewhat controversial. Makes several contacts with the 16S rRNA in the 70S ribosome.</text>
</comment>
<comment type="subunit">
    <text evidence="1">Part of the 50S ribosomal subunit. Forms a bridge to the 30S subunit in the 70S ribosome.</text>
</comment>
<comment type="similarity">
    <text evidence="1">Belongs to the universal ribosomal protein uL2 family.</text>
</comment>